<feature type="initiator methionine" description="Removed" evidence="1">
    <location>
        <position position="1"/>
    </location>
</feature>
<feature type="chain" id="PRO_0000424986" description="Profilin-3">
    <location>
        <begin position="2"/>
        <end position="134"/>
    </location>
</feature>
<feature type="short sequence motif" description="Involved in PIP2 interaction">
    <location>
        <begin position="84"/>
        <end position="100"/>
    </location>
</feature>
<feature type="modified residue" description="Phosphothreonine" evidence="1">
    <location>
        <position position="114"/>
    </location>
</feature>
<feature type="disulfide bond" evidence="3">
    <location>
        <begin position="13"/>
        <end position="118"/>
    </location>
</feature>
<protein>
    <recommendedName>
        <fullName>Profilin-3</fullName>
    </recommendedName>
    <alternativeName>
        <fullName>Pollen allergen Ole e 2</fullName>
    </alternativeName>
    <allergenName>Ole e 2</allergenName>
</protein>
<accession>P0DKE2</accession>
<accession>A4GD52</accession>
<reference key="1">
    <citation type="journal article" date="2012" name="PLoS ONE">
        <title>Characterization of profilin polymorphism in pollen with a focus on multifunctionality.</title>
        <authorList>
            <person name="Jimenez-Lopez J.C."/>
            <person name="Morales S."/>
            <person name="Castro A.J."/>
            <person name="Volkmann D."/>
            <person name="Rodriguez-Garcia M.I."/>
            <person name="Alche Jde D."/>
        </authorList>
    </citation>
    <scope>NUCLEOTIDE SEQUENCE [MRNA]</scope>
    <scope>POLYMORPHISM</scope>
    <source>
        <strain>cv. Verdial de Huevar</strain>
    </source>
</reference>
<reference key="2">
    <citation type="journal article" date="2013" name="PLoS ONE">
        <title>Analysis of the effects of polymorphism on pollen profilin structural functionality and the generation of conformational, T- and B-cell epitopes.</title>
        <authorList>
            <person name="Jimenez-Lopez J.C."/>
            <person name="Rodriguez-Garcia M.I."/>
            <person name="Alche J.D."/>
        </authorList>
    </citation>
    <scope>3D-STRUCTURE MODELING</scope>
    <scope>DISULFIDE BOND</scope>
</reference>
<proteinExistence type="evidence at protein level"/>
<dbReference type="EMBL" id="DQ117904">
    <property type="protein sequence ID" value="AAZ30394.1"/>
    <property type="molecule type" value="mRNA"/>
</dbReference>
<dbReference type="SMR" id="P0DKE2"/>
<dbReference type="GO" id="GO:0005938">
    <property type="term" value="C:cell cortex"/>
    <property type="evidence" value="ECO:0007669"/>
    <property type="project" value="TreeGrafter"/>
</dbReference>
<dbReference type="GO" id="GO:0005856">
    <property type="term" value="C:cytoskeleton"/>
    <property type="evidence" value="ECO:0007669"/>
    <property type="project" value="UniProtKB-SubCell"/>
</dbReference>
<dbReference type="GO" id="GO:0003785">
    <property type="term" value="F:actin monomer binding"/>
    <property type="evidence" value="ECO:0007669"/>
    <property type="project" value="TreeGrafter"/>
</dbReference>
<dbReference type="CDD" id="cd00148">
    <property type="entry name" value="PROF"/>
    <property type="match status" value="1"/>
</dbReference>
<dbReference type="FunFam" id="3.30.450.30:FF:000001">
    <property type="entry name" value="Profilin"/>
    <property type="match status" value="1"/>
</dbReference>
<dbReference type="Gene3D" id="3.30.450.30">
    <property type="entry name" value="Dynein light chain 2a, cytoplasmic"/>
    <property type="match status" value="1"/>
</dbReference>
<dbReference type="InterPro" id="IPR048278">
    <property type="entry name" value="PFN"/>
</dbReference>
<dbReference type="InterPro" id="IPR005455">
    <property type="entry name" value="PFN_euk"/>
</dbReference>
<dbReference type="InterPro" id="IPR036140">
    <property type="entry name" value="PFN_sf"/>
</dbReference>
<dbReference type="InterPro" id="IPR027310">
    <property type="entry name" value="Profilin_CS"/>
</dbReference>
<dbReference type="PANTHER" id="PTHR11604">
    <property type="entry name" value="PROFILIN"/>
    <property type="match status" value="1"/>
</dbReference>
<dbReference type="PANTHER" id="PTHR11604:SF25">
    <property type="entry name" value="PROFILIN-5"/>
    <property type="match status" value="1"/>
</dbReference>
<dbReference type="Pfam" id="PF00235">
    <property type="entry name" value="Profilin"/>
    <property type="match status" value="1"/>
</dbReference>
<dbReference type="PRINTS" id="PR00392">
    <property type="entry name" value="PROFILIN"/>
</dbReference>
<dbReference type="PRINTS" id="PR01640">
    <property type="entry name" value="PROFILINPLNT"/>
</dbReference>
<dbReference type="SMART" id="SM00392">
    <property type="entry name" value="PROF"/>
    <property type="match status" value="1"/>
</dbReference>
<dbReference type="SUPFAM" id="SSF55770">
    <property type="entry name" value="Profilin (actin-binding protein)"/>
    <property type="match status" value="1"/>
</dbReference>
<dbReference type="PROSITE" id="PS00414">
    <property type="entry name" value="PROFILIN"/>
    <property type="match status" value="1"/>
</dbReference>
<organism>
    <name type="scientific">Olea europaea</name>
    <name type="common">Common olive</name>
    <dbReference type="NCBI Taxonomy" id="4146"/>
    <lineage>
        <taxon>Eukaryota</taxon>
        <taxon>Viridiplantae</taxon>
        <taxon>Streptophyta</taxon>
        <taxon>Embryophyta</taxon>
        <taxon>Tracheophyta</taxon>
        <taxon>Spermatophyta</taxon>
        <taxon>Magnoliopsida</taxon>
        <taxon>eudicotyledons</taxon>
        <taxon>Gunneridae</taxon>
        <taxon>Pentapetalae</taxon>
        <taxon>asterids</taxon>
        <taxon>lamiids</taxon>
        <taxon>Lamiales</taxon>
        <taxon>Oleaceae</taxon>
        <taxon>Oleeae</taxon>
        <taxon>Olea</taxon>
    </lineage>
</organism>
<keyword id="KW-0009">Actin-binding</keyword>
<keyword id="KW-0020">Allergen</keyword>
<keyword id="KW-0963">Cytoplasm</keyword>
<keyword id="KW-0206">Cytoskeleton</keyword>
<keyword id="KW-1015">Disulfide bond</keyword>
<keyword id="KW-0597">Phosphoprotein</keyword>
<comment type="function">
    <text evidence="1">Binds to actin and affects the structure of the cytoskeleton. At high concentrations, profilin prevents the polymerization of actin, whereas it enhances it at low concentrations (By similarity).</text>
</comment>
<comment type="subunit">
    <text evidence="1">Occurs in many kinds of cells as a complex with monomeric actin in a 1:1 ratio.</text>
</comment>
<comment type="subcellular location">
    <subcellularLocation>
        <location evidence="1">Cytoplasm</location>
        <location evidence="1">Cytoskeleton</location>
    </subcellularLocation>
</comment>
<comment type="PTM">
    <text evidence="1">Phosphorylated by MAP kinases.</text>
</comment>
<comment type="polymorphism">
    <text>Several isoforms of the allergen exist due to polymorphism.</text>
</comment>
<comment type="allergen">
    <text>Causes an allergic reaction in human.</text>
</comment>
<comment type="miscellaneous">
    <text evidence="3">The variability of the residues taking part of IgE-binding epitopes might be responsible of the difference in cross-reactivity among olive pollen cultivars, and between distantly related pollen species, leading to a variable range of allergy reactions among atopic patients.</text>
</comment>
<comment type="similarity">
    <text evidence="2">Belongs to the profilin family.</text>
</comment>
<sequence>MSWQTYVDDHLMCDIEGHEDHRLTAAAIVGHDGSVWAQSATFPQFKPEEMNGIMTDFNEPGHLAPTGLHLGGTKYMVIQGEAGAVIRGKKGSGGITIKKTGQALVFGIYEEPVTPGQCNMVVERLGDYLLEQGL</sequence>
<evidence type="ECO:0000250" key="1"/>
<evidence type="ECO:0000305" key="2"/>
<evidence type="ECO:0000305" key="3">
    <source>
    </source>
</evidence>
<name>PROFU_OLEEU</name>